<gene>
    <name evidence="1" type="primary">tig</name>
    <name type="ordered locus">LMHCC_1309</name>
</gene>
<accession>B8DHN8</accession>
<evidence type="ECO:0000255" key="1">
    <source>
        <dbReference type="HAMAP-Rule" id="MF_00303"/>
    </source>
</evidence>
<organism>
    <name type="scientific">Listeria monocytogenes serotype 4a (strain HCC23)</name>
    <dbReference type="NCBI Taxonomy" id="552536"/>
    <lineage>
        <taxon>Bacteria</taxon>
        <taxon>Bacillati</taxon>
        <taxon>Bacillota</taxon>
        <taxon>Bacilli</taxon>
        <taxon>Bacillales</taxon>
        <taxon>Listeriaceae</taxon>
        <taxon>Listeria</taxon>
    </lineage>
</organism>
<protein>
    <recommendedName>
        <fullName evidence="1">Trigger factor</fullName>
        <shortName evidence="1">TF</shortName>
        <ecNumber evidence="1">5.2.1.8</ecNumber>
    </recommendedName>
    <alternativeName>
        <fullName evidence="1">PPIase</fullName>
    </alternativeName>
</protein>
<name>TIG_LISMH</name>
<proteinExistence type="inferred from homology"/>
<sequence>MSVKWEKQEGNVGKLTFEIEQEKVKEGLDRAFVKVRKTLNVPGFRKGKVPRQIFNQRFGEEALYQDALDILLPEVYSAAIDEAGIDPVDTPQVNIESMEKGETWVLTAEVTVKPEVKLGDYKGLEVEKRETELTTEELEAELKQLQERQAELVVKEDAPAENGDTVILDFEGFKDGVAFEGGQAENHSLELGSGQFIPGFEEKLVGLKAGDEADIELTFPEEYHAEDLAGQPVVFKVKLHEIKTKEVPALDDELAKDIDEEVETLDELKEKISKRLQEAKEESVAQAKQEEVIAKAVENAEVDIPHAMVHHEADHLMNHFAQDLQAQGLTPELYYQFTGQTEEAMHAQMEKDAEKRVKMNLVLEAIAEAENIEPTEEAIDEEISTLAEKYGMEKDAVRAALGDMSELKSDLKIRKAIDVLLDSAVEK</sequence>
<dbReference type="EC" id="5.2.1.8" evidence="1"/>
<dbReference type="EMBL" id="CP001175">
    <property type="protein sequence ID" value="ACK39654.1"/>
    <property type="molecule type" value="Genomic_DNA"/>
</dbReference>
<dbReference type="RefSeq" id="WP_003730674.1">
    <property type="nucleotide sequence ID" value="NC_011660.1"/>
</dbReference>
<dbReference type="SMR" id="B8DHN8"/>
<dbReference type="KEGG" id="lmh:LMHCC_1309"/>
<dbReference type="HOGENOM" id="CLU_033058_3_2_9"/>
<dbReference type="GO" id="GO:0005737">
    <property type="term" value="C:cytoplasm"/>
    <property type="evidence" value="ECO:0007669"/>
    <property type="project" value="UniProtKB-SubCell"/>
</dbReference>
<dbReference type="GO" id="GO:0003755">
    <property type="term" value="F:peptidyl-prolyl cis-trans isomerase activity"/>
    <property type="evidence" value="ECO:0007669"/>
    <property type="project" value="UniProtKB-UniRule"/>
</dbReference>
<dbReference type="GO" id="GO:0044183">
    <property type="term" value="F:protein folding chaperone"/>
    <property type="evidence" value="ECO:0007669"/>
    <property type="project" value="TreeGrafter"/>
</dbReference>
<dbReference type="GO" id="GO:0043022">
    <property type="term" value="F:ribosome binding"/>
    <property type="evidence" value="ECO:0007669"/>
    <property type="project" value="TreeGrafter"/>
</dbReference>
<dbReference type="GO" id="GO:0051083">
    <property type="term" value="P:'de novo' cotranslational protein folding"/>
    <property type="evidence" value="ECO:0007669"/>
    <property type="project" value="TreeGrafter"/>
</dbReference>
<dbReference type="GO" id="GO:0051301">
    <property type="term" value="P:cell division"/>
    <property type="evidence" value="ECO:0007669"/>
    <property type="project" value="UniProtKB-KW"/>
</dbReference>
<dbReference type="GO" id="GO:0061077">
    <property type="term" value="P:chaperone-mediated protein folding"/>
    <property type="evidence" value="ECO:0007669"/>
    <property type="project" value="TreeGrafter"/>
</dbReference>
<dbReference type="GO" id="GO:0015031">
    <property type="term" value="P:protein transport"/>
    <property type="evidence" value="ECO:0007669"/>
    <property type="project" value="UniProtKB-UniRule"/>
</dbReference>
<dbReference type="GO" id="GO:0043335">
    <property type="term" value="P:protein unfolding"/>
    <property type="evidence" value="ECO:0007669"/>
    <property type="project" value="TreeGrafter"/>
</dbReference>
<dbReference type="FunFam" id="3.10.50.40:FF:000001">
    <property type="entry name" value="Trigger factor"/>
    <property type="match status" value="1"/>
</dbReference>
<dbReference type="FunFam" id="3.30.70.1050:FF:000002">
    <property type="entry name" value="Trigger factor"/>
    <property type="match status" value="1"/>
</dbReference>
<dbReference type="Gene3D" id="3.10.50.40">
    <property type="match status" value="1"/>
</dbReference>
<dbReference type="Gene3D" id="3.30.70.1050">
    <property type="entry name" value="Trigger factor ribosome-binding domain"/>
    <property type="match status" value="1"/>
</dbReference>
<dbReference type="Gene3D" id="1.10.3120.10">
    <property type="entry name" value="Trigger factor, C-terminal domain"/>
    <property type="match status" value="1"/>
</dbReference>
<dbReference type="HAMAP" id="MF_00303">
    <property type="entry name" value="Trigger_factor_Tig"/>
    <property type="match status" value="1"/>
</dbReference>
<dbReference type="InterPro" id="IPR046357">
    <property type="entry name" value="PPIase_dom_sf"/>
</dbReference>
<dbReference type="InterPro" id="IPR001179">
    <property type="entry name" value="PPIase_FKBP_dom"/>
</dbReference>
<dbReference type="InterPro" id="IPR005215">
    <property type="entry name" value="Trig_fac"/>
</dbReference>
<dbReference type="InterPro" id="IPR008880">
    <property type="entry name" value="Trigger_fac_C"/>
</dbReference>
<dbReference type="InterPro" id="IPR037041">
    <property type="entry name" value="Trigger_fac_C_sf"/>
</dbReference>
<dbReference type="InterPro" id="IPR008881">
    <property type="entry name" value="Trigger_fac_ribosome-bd_bac"/>
</dbReference>
<dbReference type="InterPro" id="IPR036611">
    <property type="entry name" value="Trigger_fac_ribosome-bd_sf"/>
</dbReference>
<dbReference type="InterPro" id="IPR027304">
    <property type="entry name" value="Trigger_fact/SurA_dom_sf"/>
</dbReference>
<dbReference type="NCBIfam" id="TIGR00115">
    <property type="entry name" value="tig"/>
    <property type="match status" value="1"/>
</dbReference>
<dbReference type="PANTHER" id="PTHR30560">
    <property type="entry name" value="TRIGGER FACTOR CHAPERONE AND PEPTIDYL-PROLYL CIS/TRANS ISOMERASE"/>
    <property type="match status" value="1"/>
</dbReference>
<dbReference type="PANTHER" id="PTHR30560:SF3">
    <property type="entry name" value="TRIGGER FACTOR-LIKE PROTEIN TIG, CHLOROPLASTIC"/>
    <property type="match status" value="1"/>
</dbReference>
<dbReference type="Pfam" id="PF00254">
    <property type="entry name" value="FKBP_C"/>
    <property type="match status" value="1"/>
</dbReference>
<dbReference type="Pfam" id="PF05698">
    <property type="entry name" value="Trigger_C"/>
    <property type="match status" value="1"/>
</dbReference>
<dbReference type="Pfam" id="PF05697">
    <property type="entry name" value="Trigger_N"/>
    <property type="match status" value="1"/>
</dbReference>
<dbReference type="PIRSF" id="PIRSF003095">
    <property type="entry name" value="Trigger_factor"/>
    <property type="match status" value="1"/>
</dbReference>
<dbReference type="SUPFAM" id="SSF54534">
    <property type="entry name" value="FKBP-like"/>
    <property type="match status" value="1"/>
</dbReference>
<dbReference type="SUPFAM" id="SSF109998">
    <property type="entry name" value="Triger factor/SurA peptide-binding domain-like"/>
    <property type="match status" value="1"/>
</dbReference>
<dbReference type="SUPFAM" id="SSF102735">
    <property type="entry name" value="Trigger factor ribosome-binding domain"/>
    <property type="match status" value="1"/>
</dbReference>
<dbReference type="PROSITE" id="PS50059">
    <property type="entry name" value="FKBP_PPIASE"/>
    <property type="match status" value="1"/>
</dbReference>
<keyword id="KW-0131">Cell cycle</keyword>
<keyword id="KW-0132">Cell division</keyword>
<keyword id="KW-0143">Chaperone</keyword>
<keyword id="KW-0963">Cytoplasm</keyword>
<keyword id="KW-0413">Isomerase</keyword>
<keyword id="KW-0697">Rotamase</keyword>
<comment type="function">
    <text evidence="1">Involved in protein export. Acts as a chaperone by maintaining the newly synthesized protein in an open conformation. Functions as a peptidyl-prolyl cis-trans isomerase.</text>
</comment>
<comment type="catalytic activity">
    <reaction evidence="1">
        <text>[protein]-peptidylproline (omega=180) = [protein]-peptidylproline (omega=0)</text>
        <dbReference type="Rhea" id="RHEA:16237"/>
        <dbReference type="Rhea" id="RHEA-COMP:10747"/>
        <dbReference type="Rhea" id="RHEA-COMP:10748"/>
        <dbReference type="ChEBI" id="CHEBI:83833"/>
        <dbReference type="ChEBI" id="CHEBI:83834"/>
        <dbReference type="EC" id="5.2.1.8"/>
    </reaction>
</comment>
<comment type="subcellular location">
    <subcellularLocation>
        <location>Cytoplasm</location>
    </subcellularLocation>
    <text evidence="1">About half TF is bound to the ribosome near the polypeptide exit tunnel while the other half is free in the cytoplasm.</text>
</comment>
<comment type="domain">
    <text evidence="1">Consists of 3 domains; the N-terminus binds the ribosome, the middle domain has PPIase activity, while the C-terminus has intrinsic chaperone activity on its own.</text>
</comment>
<comment type="similarity">
    <text evidence="1">Belongs to the FKBP-type PPIase family. Tig subfamily.</text>
</comment>
<feature type="chain" id="PRO_1000198163" description="Trigger factor">
    <location>
        <begin position="1"/>
        <end position="427"/>
    </location>
</feature>
<feature type="domain" description="PPIase FKBP-type" evidence="1">
    <location>
        <begin position="163"/>
        <end position="248"/>
    </location>
</feature>
<reference key="1">
    <citation type="journal article" date="2011" name="J. Bacteriol.">
        <title>Genome sequence of lineage III Listeria monocytogenes strain HCC23.</title>
        <authorList>
            <person name="Steele C.L."/>
            <person name="Donaldson J.R."/>
            <person name="Paul D."/>
            <person name="Banes M.M."/>
            <person name="Arick T."/>
            <person name="Bridges S.M."/>
            <person name="Lawrence M.L."/>
        </authorList>
    </citation>
    <scope>NUCLEOTIDE SEQUENCE [LARGE SCALE GENOMIC DNA]</scope>
    <source>
        <strain>HCC23</strain>
    </source>
</reference>